<sequence>MADQLSEEQIVEFREAFSLFDKDGDGSITTKELGTVMRSLGQNPTEAELQDMISEVDADSNGNIEFKEFLGLMARKLRDKDSEEELKEAFRVFDKDQNGFISAAELRHVMANIGERLTDEEVGEMISEADVDGDGQINYEEFVKCMMAKKRRKRIEEKREHDGGSRTKSAGPSAAPASKRGQKCVIL</sequence>
<evidence type="ECO:0000250" key="1"/>
<evidence type="ECO:0000255" key="2">
    <source>
        <dbReference type="PROSITE-ProRule" id="PRU00448"/>
    </source>
</evidence>
<evidence type="ECO:0000256" key="3">
    <source>
        <dbReference type="SAM" id="MobiDB-lite"/>
    </source>
</evidence>
<evidence type="ECO:0000269" key="4">
    <source>
    </source>
</evidence>
<evidence type="ECO:0000269" key="5">
    <source>
    </source>
</evidence>
<evidence type="ECO:0000305" key="6"/>
<evidence type="ECO:0000305" key="7">
    <source>
    </source>
</evidence>
<accession>Q40642</accession>
<accession>Q7G0S4</accession>
<comment type="function">
    <text evidence="5">Calcium-binding protein that binds and activates CAMK1, a calcium/calmodulin-dependent kinase.</text>
</comment>
<comment type="subcellular location">
    <subcellularLocation>
        <location evidence="7">Membrane</location>
        <topology evidence="7">Lipid-anchor</topology>
    </subcellularLocation>
</comment>
<comment type="tissue specificity">
    <text evidence="4">Expressed in roots, etiolated shoots and flowers.</text>
</comment>
<comment type="similarity">
    <text evidence="6">Belongs to the calmodulin family.</text>
</comment>
<proteinExistence type="evidence at protein level"/>
<feature type="initiator methionine" description="Removed" evidence="1">
    <location>
        <position position="1"/>
    </location>
</feature>
<feature type="chain" id="PRO_0000338415" description="Calmodulin-like protein 1">
    <location>
        <begin position="2"/>
        <end position="184"/>
    </location>
</feature>
<feature type="propeptide" id="PRO_0000396746" description="Removed in mature form" evidence="6">
    <location>
        <begin position="185"/>
        <end position="187"/>
    </location>
</feature>
<feature type="domain" description="EF-hand 1" evidence="2">
    <location>
        <begin position="8"/>
        <end position="43"/>
    </location>
</feature>
<feature type="domain" description="EF-hand 2" evidence="2">
    <location>
        <begin position="44"/>
        <end position="79"/>
    </location>
</feature>
<feature type="domain" description="EF-hand 3" evidence="2">
    <location>
        <begin position="81"/>
        <end position="116"/>
    </location>
</feature>
<feature type="domain" description="EF-hand 4" evidence="2">
    <location>
        <begin position="117"/>
        <end position="152"/>
    </location>
</feature>
<feature type="region of interest" description="Disordered" evidence="3">
    <location>
        <begin position="153"/>
        <end position="187"/>
    </location>
</feature>
<feature type="compositionally biased region" description="Basic and acidic residues" evidence="3">
    <location>
        <begin position="154"/>
        <end position="165"/>
    </location>
</feature>
<feature type="compositionally biased region" description="Low complexity" evidence="3">
    <location>
        <begin position="169"/>
        <end position="178"/>
    </location>
</feature>
<feature type="binding site" evidence="2">
    <location>
        <position position="21"/>
    </location>
    <ligand>
        <name>Ca(2+)</name>
        <dbReference type="ChEBI" id="CHEBI:29108"/>
        <label>1</label>
    </ligand>
</feature>
<feature type="binding site" evidence="2">
    <location>
        <position position="23"/>
    </location>
    <ligand>
        <name>Ca(2+)</name>
        <dbReference type="ChEBI" id="CHEBI:29108"/>
        <label>1</label>
    </ligand>
</feature>
<feature type="binding site" evidence="2">
    <location>
        <position position="25"/>
    </location>
    <ligand>
        <name>Ca(2+)</name>
        <dbReference type="ChEBI" id="CHEBI:29108"/>
        <label>1</label>
    </ligand>
</feature>
<feature type="binding site" evidence="2">
    <location>
        <position position="27"/>
    </location>
    <ligand>
        <name>Ca(2+)</name>
        <dbReference type="ChEBI" id="CHEBI:29108"/>
        <label>1</label>
    </ligand>
</feature>
<feature type="binding site" evidence="2">
    <location>
        <position position="32"/>
    </location>
    <ligand>
        <name>Ca(2+)</name>
        <dbReference type="ChEBI" id="CHEBI:29108"/>
        <label>1</label>
    </ligand>
</feature>
<feature type="binding site" evidence="2">
    <location>
        <position position="57"/>
    </location>
    <ligand>
        <name>Ca(2+)</name>
        <dbReference type="ChEBI" id="CHEBI:29108"/>
        <label>2</label>
    </ligand>
</feature>
<feature type="binding site" evidence="2">
    <location>
        <position position="59"/>
    </location>
    <ligand>
        <name>Ca(2+)</name>
        <dbReference type="ChEBI" id="CHEBI:29108"/>
        <label>2</label>
    </ligand>
</feature>
<feature type="binding site" evidence="2">
    <location>
        <position position="61"/>
    </location>
    <ligand>
        <name>Ca(2+)</name>
        <dbReference type="ChEBI" id="CHEBI:29108"/>
        <label>2</label>
    </ligand>
</feature>
<feature type="binding site" evidence="2">
    <location>
        <position position="63"/>
    </location>
    <ligand>
        <name>Ca(2+)</name>
        <dbReference type="ChEBI" id="CHEBI:29108"/>
        <label>2</label>
    </ligand>
</feature>
<feature type="binding site" evidence="2">
    <location>
        <position position="68"/>
    </location>
    <ligand>
        <name>Ca(2+)</name>
        <dbReference type="ChEBI" id="CHEBI:29108"/>
        <label>2</label>
    </ligand>
</feature>
<feature type="binding site" evidence="2">
    <location>
        <position position="94"/>
    </location>
    <ligand>
        <name>Ca(2+)</name>
        <dbReference type="ChEBI" id="CHEBI:29108"/>
        <label>3</label>
    </ligand>
</feature>
<feature type="binding site" evidence="2">
    <location>
        <position position="96"/>
    </location>
    <ligand>
        <name>Ca(2+)</name>
        <dbReference type="ChEBI" id="CHEBI:29108"/>
        <label>3</label>
    </ligand>
</feature>
<feature type="binding site" evidence="2">
    <location>
        <position position="98"/>
    </location>
    <ligand>
        <name>Ca(2+)</name>
        <dbReference type="ChEBI" id="CHEBI:29108"/>
        <label>3</label>
    </ligand>
</feature>
<feature type="binding site" evidence="2">
    <location>
        <position position="105"/>
    </location>
    <ligand>
        <name>Ca(2+)</name>
        <dbReference type="ChEBI" id="CHEBI:29108"/>
        <label>3</label>
    </ligand>
</feature>
<feature type="binding site" evidence="2">
    <location>
        <position position="130"/>
    </location>
    <ligand>
        <name>Ca(2+)</name>
        <dbReference type="ChEBI" id="CHEBI:29108"/>
        <label>4</label>
    </ligand>
</feature>
<feature type="binding site" evidence="2">
    <location>
        <position position="132"/>
    </location>
    <ligand>
        <name>Ca(2+)</name>
        <dbReference type="ChEBI" id="CHEBI:29108"/>
        <label>4</label>
    </ligand>
</feature>
<feature type="binding site" evidence="2">
    <location>
        <position position="134"/>
    </location>
    <ligand>
        <name>Ca(2+)</name>
        <dbReference type="ChEBI" id="CHEBI:29108"/>
        <label>4</label>
    </ligand>
</feature>
<feature type="binding site" evidence="2">
    <location>
        <position position="136"/>
    </location>
    <ligand>
        <name>Ca(2+)</name>
        <dbReference type="ChEBI" id="CHEBI:29108"/>
        <label>4</label>
    </ligand>
</feature>
<feature type="binding site">
    <location>
        <position position="141"/>
    </location>
    <ligand>
        <name>Ca(2+)</name>
        <dbReference type="ChEBI" id="CHEBI:29108"/>
        <label>4</label>
    </ligand>
</feature>
<feature type="modified residue" description="N-acetylalanine" evidence="1">
    <location>
        <position position="2"/>
    </location>
</feature>
<feature type="modified residue" description="Cysteine methyl ester" evidence="6">
    <location>
        <position position="184"/>
    </location>
</feature>
<feature type="lipid moiety-binding region" description="S-farnesyl cysteine" evidence="7">
    <location>
        <position position="184"/>
    </location>
</feature>
<feature type="mutagenesis site" description="No effect on CAMK1 activation." evidence="5">
    <original>S</original>
    <variation>C</variation>
    <location>
        <position position="27"/>
    </location>
</feature>
<feature type="mutagenesis site" description="No effect on CAMK1 activation." evidence="5">
    <original>N</original>
    <variation>T</variation>
    <location>
        <position position="63"/>
    </location>
</feature>
<feature type="mutagenesis site" description="No effect on CAMK1 activation." evidence="5">
    <original>K</original>
    <variation>P</variation>
    <location>
        <position position="67"/>
    </location>
</feature>
<feature type="mutagenesis site" description="No effect on CAMK1 activation." evidence="5">
    <original>G</original>
    <variation>N</variation>
    <location>
        <position position="71"/>
    </location>
</feature>
<feature type="mutagenesis site" description="No effect on CAMK1 activation." evidence="5">
    <original>K</original>
    <variation>T</variation>
    <location>
        <position position="80"/>
    </location>
</feature>
<feature type="mutagenesis site" description="No effect on CAMK1 binding. Decrease in CAMK1 activation. Loss of CAMK1 activation; when associated with D-123 and R-127." evidence="5">
    <original>A</original>
    <variation>T</variation>
    <location>
        <position position="111"/>
    </location>
</feature>
<feature type="mutagenesis site" description="No effect on CAMK1 binding. Decrease in CAMK1 activation. Loss of CAMK1 activation; when associated with T-111 and R-127." evidence="5">
    <original>G</original>
    <variation>D</variation>
    <location>
        <position position="123"/>
    </location>
</feature>
<feature type="mutagenesis site" description="No effect on CAMK1 binding. Decrease in CAMK1 activation. Loss of CAMK1 activation; when associated with T-111 and D-123." evidence="5">
    <original>S</original>
    <variation>R</variation>
    <location>
        <position position="127"/>
    </location>
</feature>
<feature type="mutagenesis site" description="No effect on CAMK1 activation." evidence="5">
    <original>C</original>
    <variation>V</variation>
    <location>
        <position position="145"/>
    </location>
</feature>
<reference key="1">
    <citation type="journal article" date="1999" name="DNA Res.">
        <title>A novel calmodulin-like protein gene in rice which has an unusual prolonged C-terminal sequence carrying a putative prenylation site.</title>
        <authorList>
            <person name="Xiao C."/>
            <person name="Xin H."/>
            <person name="Dong A."/>
            <person name="Sun C."/>
            <person name="Cao K."/>
        </authorList>
    </citation>
    <scope>NUCLEOTIDE SEQUENCE [GENOMIC DNA / MRNA]</scope>
    <scope>TISSUE SPECIFICITY</scope>
    <source>
        <strain>cv. Guang-Lu-Ai No.4</strain>
        <tissue>Shoot</tissue>
    </source>
</reference>
<reference key="2">
    <citation type="submission" date="2000-02" db="EMBL/GenBank/DDBJ databases">
        <title>Identification and characterization of fungal elicitor responsive genes by mRNA differential display.</title>
        <authorList>
            <person name="Choi Y.J."/>
            <person name="Kim C.Y."/>
            <person name="Cheon S.Y."/>
            <person name="Cho M.J."/>
        </authorList>
    </citation>
    <scope>NUCLEOTIDE SEQUENCE [MRNA]</scope>
    <source>
        <strain>cv. Milyang 117</strain>
    </source>
</reference>
<reference key="3">
    <citation type="journal article" date="2005" name="PLoS Biol.">
        <title>The genomes of Oryza sativa: a history of duplications.</title>
        <authorList>
            <person name="Yu J."/>
            <person name="Wang J."/>
            <person name="Lin W."/>
            <person name="Li S."/>
            <person name="Li H."/>
            <person name="Zhou J."/>
            <person name="Ni P."/>
            <person name="Dong W."/>
            <person name="Hu S."/>
            <person name="Zeng C."/>
            <person name="Zhang J."/>
            <person name="Zhang Y."/>
            <person name="Li R."/>
            <person name="Xu Z."/>
            <person name="Li S."/>
            <person name="Li X."/>
            <person name="Zheng H."/>
            <person name="Cong L."/>
            <person name="Lin L."/>
            <person name="Yin J."/>
            <person name="Geng J."/>
            <person name="Li G."/>
            <person name="Shi J."/>
            <person name="Liu J."/>
            <person name="Lv H."/>
            <person name="Li J."/>
            <person name="Wang J."/>
            <person name="Deng Y."/>
            <person name="Ran L."/>
            <person name="Shi X."/>
            <person name="Wang X."/>
            <person name="Wu Q."/>
            <person name="Li C."/>
            <person name="Ren X."/>
            <person name="Wang J."/>
            <person name="Wang X."/>
            <person name="Li D."/>
            <person name="Liu D."/>
            <person name="Zhang X."/>
            <person name="Ji Z."/>
            <person name="Zhao W."/>
            <person name="Sun Y."/>
            <person name="Zhang Z."/>
            <person name="Bao J."/>
            <person name="Han Y."/>
            <person name="Dong L."/>
            <person name="Ji J."/>
            <person name="Chen P."/>
            <person name="Wu S."/>
            <person name="Liu J."/>
            <person name="Xiao Y."/>
            <person name="Bu D."/>
            <person name="Tan J."/>
            <person name="Yang L."/>
            <person name="Ye C."/>
            <person name="Zhang J."/>
            <person name="Xu J."/>
            <person name="Zhou Y."/>
            <person name="Yu Y."/>
            <person name="Zhang B."/>
            <person name="Zhuang S."/>
            <person name="Wei H."/>
            <person name="Liu B."/>
            <person name="Lei M."/>
            <person name="Yu H."/>
            <person name="Li Y."/>
            <person name="Xu H."/>
            <person name="Wei S."/>
            <person name="He X."/>
            <person name="Fang L."/>
            <person name="Zhang Z."/>
            <person name="Zhang Y."/>
            <person name="Huang X."/>
            <person name="Su Z."/>
            <person name="Tong W."/>
            <person name="Li J."/>
            <person name="Tong Z."/>
            <person name="Li S."/>
            <person name="Ye J."/>
            <person name="Wang L."/>
            <person name="Fang L."/>
            <person name="Lei T."/>
            <person name="Chen C.-S."/>
            <person name="Chen H.-C."/>
            <person name="Xu Z."/>
            <person name="Li H."/>
            <person name="Huang H."/>
            <person name="Zhang F."/>
            <person name="Xu H."/>
            <person name="Li N."/>
            <person name="Zhao C."/>
            <person name="Li S."/>
            <person name="Dong L."/>
            <person name="Huang Y."/>
            <person name="Li L."/>
            <person name="Xi Y."/>
            <person name="Qi Q."/>
            <person name="Li W."/>
            <person name="Zhang B."/>
            <person name="Hu W."/>
            <person name="Zhang Y."/>
            <person name="Tian X."/>
            <person name="Jiao Y."/>
            <person name="Liang X."/>
            <person name="Jin J."/>
            <person name="Gao L."/>
            <person name="Zheng W."/>
            <person name="Hao B."/>
            <person name="Liu S.-M."/>
            <person name="Wang W."/>
            <person name="Yuan L."/>
            <person name="Cao M."/>
            <person name="McDermott J."/>
            <person name="Samudrala R."/>
            <person name="Wang J."/>
            <person name="Wong G.K.-S."/>
            <person name="Yang H."/>
        </authorList>
    </citation>
    <scope>NUCLEOTIDE SEQUENCE [LARGE SCALE GENOMIC DNA]</scope>
    <source>
        <strain>cv. 93-11</strain>
    </source>
</reference>
<reference key="4">
    <citation type="journal article" date="2002" name="Plant Mol. Biol.">
        <title>The subcellular localization of an unusual rice calmodulin isoform, OsCaM61, depends on its prenylation status.</title>
        <authorList>
            <person name="Dong A."/>
            <person name="Xin H."/>
            <person name="Yu Y."/>
            <person name="Sun C."/>
            <person name="Cao K."/>
            <person name="Shen W.-H."/>
        </authorList>
    </citation>
    <scope>SUBCELLULAR LOCATION</scope>
    <scope>ISOPRENYLATION AT CYS-184</scope>
</reference>
<reference key="5">
    <citation type="journal article" date="2006" name="FEBS Lett.">
        <title>Calmodulin isoform-specific activation of a rice calmodulin-binding kinase conferred by only three amino-acids of OsCaM61.</title>
        <authorList>
            <person name="Li D.-F."/>
            <person name="Li J."/>
            <person name="Ma L."/>
            <person name="Zhang L."/>
            <person name="Lu Y.-T."/>
        </authorList>
    </citation>
    <scope>FUNCTION</scope>
    <scope>MUTAGENESIS OF SER-27; ASN-63; LYS-67; GLY-71; LYS-80; ALA-111; GLY-123; SER-127 AND CYS-145</scope>
</reference>
<reference key="6">
    <citation type="journal article" date="2007" name="BMC Plant Biol.">
        <title>Genome-wide identification and analyses of the rice calmodulin and related potential calcium sensor proteins.</title>
        <authorList>
            <person name="Boonburapong B."/>
            <person name="Buaboocha T."/>
        </authorList>
    </citation>
    <scope>GENE FAMILY</scope>
    <scope>NOMENCLATURE</scope>
</reference>
<organism>
    <name type="scientific">Oryza sativa subsp. indica</name>
    <name type="common">Rice</name>
    <dbReference type="NCBI Taxonomy" id="39946"/>
    <lineage>
        <taxon>Eukaryota</taxon>
        <taxon>Viridiplantae</taxon>
        <taxon>Streptophyta</taxon>
        <taxon>Embryophyta</taxon>
        <taxon>Tracheophyta</taxon>
        <taxon>Spermatophyta</taxon>
        <taxon>Magnoliopsida</taxon>
        <taxon>Liliopsida</taxon>
        <taxon>Poales</taxon>
        <taxon>Poaceae</taxon>
        <taxon>BOP clade</taxon>
        <taxon>Oryzoideae</taxon>
        <taxon>Oryzeae</taxon>
        <taxon>Oryzinae</taxon>
        <taxon>Oryza</taxon>
        <taxon>Oryza sativa</taxon>
    </lineage>
</organism>
<name>CML1_ORYSI</name>
<dbReference type="EMBL" id="U37936">
    <property type="protein sequence ID" value="AAA98933.1"/>
    <property type="molecule type" value="mRNA"/>
</dbReference>
<dbReference type="EMBL" id="AF064456">
    <property type="protein sequence ID" value="AAC18355.1"/>
    <property type="molecule type" value="Genomic_DNA"/>
</dbReference>
<dbReference type="EMBL" id="AF231026">
    <property type="protein sequence ID" value="AAF33852.1"/>
    <property type="molecule type" value="mRNA"/>
</dbReference>
<dbReference type="EMBL" id="CM000126">
    <property type="protein sequence ID" value="EAY76219.1"/>
    <property type="molecule type" value="Genomic_DNA"/>
</dbReference>
<dbReference type="PIR" id="T02887">
    <property type="entry name" value="T02887"/>
</dbReference>
<dbReference type="SMR" id="Q40642"/>
<dbReference type="IntAct" id="Q40642">
    <property type="interactions" value="1"/>
</dbReference>
<dbReference type="MINT" id="Q40642"/>
<dbReference type="STRING" id="39946.Q40642"/>
<dbReference type="EnsemblPlants" id="BGIOSGA004661-TA">
    <property type="protein sequence ID" value="BGIOSGA004661-PA"/>
    <property type="gene ID" value="BGIOSGA004661"/>
</dbReference>
<dbReference type="EnsemblPlants" id="OsGoSa_01g0036640.02">
    <property type="protein sequence ID" value="OsGoSa_01g0036640.02"/>
    <property type="gene ID" value="OsGoSa_01g0036640"/>
</dbReference>
<dbReference type="EnsemblPlants" id="OsIR64_01g0036210.01">
    <property type="protein sequence ID" value="OsIR64_01g0036210.01"/>
    <property type="gene ID" value="OsIR64_01g0036210"/>
</dbReference>
<dbReference type="EnsemblPlants" id="OsKYG_01g0036410.02">
    <property type="protein sequence ID" value="OsKYG_01g0036410.02"/>
    <property type="gene ID" value="OsKYG_01g0036410"/>
</dbReference>
<dbReference type="EnsemblPlants" id="OsLima_01g0036350.01">
    <property type="protein sequence ID" value="OsLima_01g0036350.01"/>
    <property type="gene ID" value="OsLima_01g0036350"/>
</dbReference>
<dbReference type="EnsemblPlants" id="OsLiXu_01g0036720.01">
    <property type="protein sequence ID" value="OsLiXu_01g0036720.01"/>
    <property type="gene ID" value="OsLiXu_01g0036720"/>
</dbReference>
<dbReference type="EnsemblPlants" id="OsMH63_01G037180_01">
    <property type="protein sequence ID" value="OsMH63_01G037180_01"/>
    <property type="gene ID" value="OsMH63_01G037180"/>
</dbReference>
<dbReference type="EnsemblPlants" id="OsPr106_01g0036460.01">
    <property type="protein sequence ID" value="OsPr106_01g0036460.01"/>
    <property type="gene ID" value="OsPr106_01g0036460"/>
</dbReference>
<dbReference type="Gramene" id="BGIOSGA004661-TA">
    <property type="protein sequence ID" value="BGIOSGA004661-PA"/>
    <property type="gene ID" value="BGIOSGA004661"/>
</dbReference>
<dbReference type="Gramene" id="OsGoSa_01g0036640.02">
    <property type="protein sequence ID" value="OsGoSa_01g0036640.02"/>
    <property type="gene ID" value="OsGoSa_01g0036640"/>
</dbReference>
<dbReference type="Gramene" id="OsIR64_01g0036210.01">
    <property type="protein sequence ID" value="OsIR64_01g0036210.01"/>
    <property type="gene ID" value="OsIR64_01g0036210"/>
</dbReference>
<dbReference type="Gramene" id="OsKYG_01g0036410.02">
    <property type="protein sequence ID" value="OsKYG_01g0036410.02"/>
    <property type="gene ID" value="OsKYG_01g0036410"/>
</dbReference>
<dbReference type="Gramene" id="OsLima_01g0036350.01">
    <property type="protein sequence ID" value="OsLima_01g0036350.01"/>
    <property type="gene ID" value="OsLima_01g0036350"/>
</dbReference>
<dbReference type="Gramene" id="OsLiXu_01g0036720.01">
    <property type="protein sequence ID" value="OsLiXu_01g0036720.01"/>
    <property type="gene ID" value="OsLiXu_01g0036720"/>
</dbReference>
<dbReference type="Gramene" id="OsMH63_01G037180_01">
    <property type="protein sequence ID" value="OsMH63_01G037180_01"/>
    <property type="gene ID" value="OsMH63_01G037180"/>
</dbReference>
<dbReference type="Gramene" id="OsPr106_01g0036460.01">
    <property type="protein sequence ID" value="OsPr106_01g0036460.01"/>
    <property type="gene ID" value="OsPr106_01g0036460"/>
</dbReference>
<dbReference type="HOGENOM" id="CLU_061288_2_0_1"/>
<dbReference type="OMA" id="YICADEL"/>
<dbReference type="OrthoDB" id="727752at2759"/>
<dbReference type="Proteomes" id="UP000007015">
    <property type="component" value="Chromosome 1"/>
</dbReference>
<dbReference type="GO" id="GO:0016020">
    <property type="term" value="C:membrane"/>
    <property type="evidence" value="ECO:0007669"/>
    <property type="project" value="UniProtKB-SubCell"/>
</dbReference>
<dbReference type="GO" id="GO:0016460">
    <property type="term" value="C:myosin II complex"/>
    <property type="evidence" value="ECO:0007669"/>
    <property type="project" value="TreeGrafter"/>
</dbReference>
<dbReference type="GO" id="GO:0005509">
    <property type="term" value="F:calcium ion binding"/>
    <property type="evidence" value="ECO:0007669"/>
    <property type="project" value="InterPro"/>
</dbReference>
<dbReference type="CDD" id="cd00051">
    <property type="entry name" value="EFh"/>
    <property type="match status" value="2"/>
</dbReference>
<dbReference type="FunFam" id="1.10.238.10:FF:000006">
    <property type="entry name" value="Calmodulin 1"/>
    <property type="match status" value="1"/>
</dbReference>
<dbReference type="FunFam" id="1.10.238.10:FF:000398">
    <property type="entry name" value="Calmodulin-like protein 3"/>
    <property type="match status" value="1"/>
</dbReference>
<dbReference type="Gene3D" id="1.10.238.10">
    <property type="entry name" value="EF-hand"/>
    <property type="match status" value="3"/>
</dbReference>
<dbReference type="InterPro" id="IPR050230">
    <property type="entry name" value="CALM/Myosin/TropC-like"/>
</dbReference>
<dbReference type="InterPro" id="IPR011992">
    <property type="entry name" value="EF-hand-dom_pair"/>
</dbReference>
<dbReference type="InterPro" id="IPR018247">
    <property type="entry name" value="EF_Hand_1_Ca_BS"/>
</dbReference>
<dbReference type="InterPro" id="IPR002048">
    <property type="entry name" value="EF_hand_dom"/>
</dbReference>
<dbReference type="PANTHER" id="PTHR23048:SF53">
    <property type="entry name" value="CALMODULIN"/>
    <property type="match status" value="1"/>
</dbReference>
<dbReference type="PANTHER" id="PTHR23048">
    <property type="entry name" value="MYOSIN LIGHT CHAIN 1, 3"/>
    <property type="match status" value="1"/>
</dbReference>
<dbReference type="Pfam" id="PF13499">
    <property type="entry name" value="EF-hand_7"/>
    <property type="match status" value="2"/>
</dbReference>
<dbReference type="SMART" id="SM00054">
    <property type="entry name" value="EFh"/>
    <property type="match status" value="4"/>
</dbReference>
<dbReference type="SUPFAM" id="SSF47473">
    <property type="entry name" value="EF-hand"/>
    <property type="match status" value="1"/>
</dbReference>
<dbReference type="PROSITE" id="PS00018">
    <property type="entry name" value="EF_HAND_1"/>
    <property type="match status" value="4"/>
</dbReference>
<dbReference type="PROSITE" id="PS50222">
    <property type="entry name" value="EF_HAND_2"/>
    <property type="match status" value="4"/>
</dbReference>
<keyword id="KW-0007">Acetylation</keyword>
<keyword id="KW-0106">Calcium</keyword>
<keyword id="KW-0449">Lipoprotein</keyword>
<keyword id="KW-0472">Membrane</keyword>
<keyword id="KW-0479">Metal-binding</keyword>
<keyword id="KW-0488">Methylation</keyword>
<keyword id="KW-0636">Prenylation</keyword>
<keyword id="KW-1185">Reference proteome</keyword>
<keyword id="KW-0677">Repeat</keyword>
<protein>
    <recommendedName>
        <fullName>Calmodulin-like protein 1</fullName>
    </recommendedName>
    <alternativeName>
        <fullName>OsCaM61</fullName>
    </alternativeName>
</protein>
<gene>
    <name type="primary">CML1</name>
    <name type="ORF">OsI_004066</name>
</gene>